<proteinExistence type="evidence at protein level"/>
<reference key="1">
    <citation type="submission" date="2006-05" db="UniProtKB">
        <title>Search for elicitins in Pythium hypogynum.</title>
        <authorList>
            <person name="Bala K."/>
            <person name="Belbahri L."/>
            <person name="Calmin G."/>
            <person name="Paul B."/>
            <person name="Lefort F."/>
        </authorList>
    </citation>
    <scope>PROTEIN SEQUENCE</scope>
    <scope>SUBCELLULAR LOCATION</scope>
</reference>
<accession>P84876</accession>
<organism>
    <name type="scientific">Globisporangium hypogynum</name>
    <name type="common">Pythium hypogynum</name>
    <dbReference type="NCBI Taxonomy" id="255163"/>
    <lineage>
        <taxon>Eukaryota</taxon>
        <taxon>Sar</taxon>
        <taxon>Stramenopiles</taxon>
        <taxon>Oomycota</taxon>
        <taxon>Pythiales</taxon>
        <taxon>Pythiaceae</taxon>
        <taxon>Globisporangium</taxon>
    </lineage>
</organism>
<dbReference type="GO" id="GO:0005576">
    <property type="term" value="C:extracellular region"/>
    <property type="evidence" value="ECO:0007669"/>
    <property type="project" value="UniProtKB-SubCell"/>
</dbReference>
<sequence>AMTEELEAVENNGVR</sequence>
<protein>
    <recommendedName>
        <fullName>Secreted protein F1</fullName>
    </recommendedName>
</protein>
<keyword id="KW-0903">Direct protein sequencing</keyword>
<keyword id="KW-0964">Secreted</keyword>
<feature type="chain" id="PRO_0000245326" description="Secreted protein F1">
    <location>
        <begin position="1" status="less than"/>
        <end position="15" status="greater than"/>
    </location>
</feature>
<feature type="non-terminal residue" evidence="2">
    <location>
        <position position="1"/>
    </location>
</feature>
<feature type="non-terminal residue" evidence="2">
    <location>
        <position position="15"/>
    </location>
</feature>
<comment type="subcellular location">
    <subcellularLocation>
        <location evidence="1">Secreted</location>
    </subcellularLocation>
</comment>
<evidence type="ECO:0000269" key="1">
    <source ref="1"/>
</evidence>
<evidence type="ECO:0000303" key="2">
    <source ref="1"/>
</evidence>
<name>SPF1_GLOHY</name>